<proteinExistence type="inferred from homology"/>
<accession>B8HV47</accession>
<gene>
    <name evidence="1" type="primary">rpsJ</name>
    <name evidence="1" type="synonym">rps10</name>
    <name type="ordered locus">Cyan7425_0707</name>
</gene>
<dbReference type="EMBL" id="CP001344">
    <property type="protein sequence ID" value="ACL43094.1"/>
    <property type="molecule type" value="Genomic_DNA"/>
</dbReference>
<dbReference type="SMR" id="B8HV47"/>
<dbReference type="STRING" id="395961.Cyan7425_0707"/>
<dbReference type="KEGG" id="cyn:Cyan7425_0707"/>
<dbReference type="eggNOG" id="COG0051">
    <property type="taxonomic scope" value="Bacteria"/>
</dbReference>
<dbReference type="HOGENOM" id="CLU_122625_1_3_3"/>
<dbReference type="OrthoDB" id="9804464at2"/>
<dbReference type="GO" id="GO:1990904">
    <property type="term" value="C:ribonucleoprotein complex"/>
    <property type="evidence" value="ECO:0007669"/>
    <property type="project" value="UniProtKB-KW"/>
</dbReference>
<dbReference type="GO" id="GO:0005840">
    <property type="term" value="C:ribosome"/>
    <property type="evidence" value="ECO:0007669"/>
    <property type="project" value="UniProtKB-KW"/>
</dbReference>
<dbReference type="GO" id="GO:0003735">
    <property type="term" value="F:structural constituent of ribosome"/>
    <property type="evidence" value="ECO:0007669"/>
    <property type="project" value="InterPro"/>
</dbReference>
<dbReference type="GO" id="GO:0000049">
    <property type="term" value="F:tRNA binding"/>
    <property type="evidence" value="ECO:0007669"/>
    <property type="project" value="UniProtKB-UniRule"/>
</dbReference>
<dbReference type="GO" id="GO:0006412">
    <property type="term" value="P:translation"/>
    <property type="evidence" value="ECO:0007669"/>
    <property type="project" value="UniProtKB-UniRule"/>
</dbReference>
<dbReference type="FunFam" id="3.30.70.600:FF:000001">
    <property type="entry name" value="30S ribosomal protein S10"/>
    <property type="match status" value="1"/>
</dbReference>
<dbReference type="Gene3D" id="3.30.70.600">
    <property type="entry name" value="Ribosomal protein S10 domain"/>
    <property type="match status" value="1"/>
</dbReference>
<dbReference type="HAMAP" id="MF_00508">
    <property type="entry name" value="Ribosomal_uS10"/>
    <property type="match status" value="1"/>
</dbReference>
<dbReference type="InterPro" id="IPR001848">
    <property type="entry name" value="Ribosomal_uS10"/>
</dbReference>
<dbReference type="InterPro" id="IPR018268">
    <property type="entry name" value="Ribosomal_uS10_CS"/>
</dbReference>
<dbReference type="InterPro" id="IPR027486">
    <property type="entry name" value="Ribosomal_uS10_dom"/>
</dbReference>
<dbReference type="InterPro" id="IPR036838">
    <property type="entry name" value="Ribosomal_uS10_dom_sf"/>
</dbReference>
<dbReference type="NCBIfam" id="NF001861">
    <property type="entry name" value="PRK00596.1"/>
    <property type="match status" value="1"/>
</dbReference>
<dbReference type="NCBIfam" id="TIGR01049">
    <property type="entry name" value="rpsJ_bact"/>
    <property type="match status" value="1"/>
</dbReference>
<dbReference type="PANTHER" id="PTHR11700">
    <property type="entry name" value="30S RIBOSOMAL PROTEIN S10 FAMILY MEMBER"/>
    <property type="match status" value="1"/>
</dbReference>
<dbReference type="Pfam" id="PF00338">
    <property type="entry name" value="Ribosomal_S10"/>
    <property type="match status" value="1"/>
</dbReference>
<dbReference type="PRINTS" id="PR00971">
    <property type="entry name" value="RIBOSOMALS10"/>
</dbReference>
<dbReference type="SMART" id="SM01403">
    <property type="entry name" value="Ribosomal_S10"/>
    <property type="match status" value="1"/>
</dbReference>
<dbReference type="SUPFAM" id="SSF54999">
    <property type="entry name" value="Ribosomal protein S10"/>
    <property type="match status" value="1"/>
</dbReference>
<dbReference type="PROSITE" id="PS00361">
    <property type="entry name" value="RIBOSOMAL_S10"/>
    <property type="match status" value="1"/>
</dbReference>
<reference key="1">
    <citation type="journal article" date="2011" name="MBio">
        <title>Novel metabolic attributes of the genus Cyanothece, comprising a group of unicellular nitrogen-fixing Cyanobacteria.</title>
        <authorList>
            <person name="Bandyopadhyay A."/>
            <person name="Elvitigala T."/>
            <person name="Welsh E."/>
            <person name="Stockel J."/>
            <person name="Liberton M."/>
            <person name="Min H."/>
            <person name="Sherman L.A."/>
            <person name="Pakrasi H.B."/>
        </authorList>
    </citation>
    <scope>NUCLEOTIDE SEQUENCE [LARGE SCALE GENOMIC DNA]</scope>
    <source>
        <strain>PCC 7425 / ATCC 29141</strain>
    </source>
</reference>
<protein>
    <recommendedName>
        <fullName evidence="1">Small ribosomal subunit protein uS10</fullName>
    </recommendedName>
    <alternativeName>
        <fullName evidence="2">30S ribosomal protein S10</fullName>
    </alternativeName>
</protein>
<comment type="function">
    <text evidence="1">Involved in the binding of tRNA to the ribosomes.</text>
</comment>
<comment type="subunit">
    <text evidence="1">Part of the 30S ribosomal subunit.</text>
</comment>
<comment type="similarity">
    <text evidence="1">Belongs to the universal ribosomal protein uS10 family.</text>
</comment>
<evidence type="ECO:0000255" key="1">
    <source>
        <dbReference type="HAMAP-Rule" id="MF_00508"/>
    </source>
</evidence>
<evidence type="ECO:0000305" key="2"/>
<sequence>MANLQQQKIRIRLKAFDHRLLDTSCEKIVDTAKRTSASAVGPIPLPTRRRIYCVLRSPHVDKDSREHFETRTHRRIIDIYQPSPKTIDALMKLDLPAGVDIEVKL</sequence>
<keyword id="KW-0687">Ribonucleoprotein</keyword>
<keyword id="KW-0689">Ribosomal protein</keyword>
<organism>
    <name type="scientific">Cyanothece sp. (strain PCC 7425 / ATCC 29141)</name>
    <dbReference type="NCBI Taxonomy" id="395961"/>
    <lineage>
        <taxon>Bacteria</taxon>
        <taxon>Bacillati</taxon>
        <taxon>Cyanobacteriota</taxon>
        <taxon>Cyanophyceae</taxon>
        <taxon>Gomontiellales</taxon>
        <taxon>Cyanothecaceae</taxon>
        <taxon>Cyanothece</taxon>
    </lineage>
</organism>
<name>RS10_CYAP4</name>
<feature type="chain" id="PRO_1000196304" description="Small ribosomal subunit protein uS10">
    <location>
        <begin position="1"/>
        <end position="105"/>
    </location>
</feature>